<name>MURC_PAEAT</name>
<gene>
    <name evidence="1" type="primary">murC</name>
    <name type="ordered locus">AAur_1711</name>
</gene>
<keyword id="KW-0067">ATP-binding</keyword>
<keyword id="KW-0131">Cell cycle</keyword>
<keyword id="KW-0132">Cell division</keyword>
<keyword id="KW-0133">Cell shape</keyword>
<keyword id="KW-0961">Cell wall biogenesis/degradation</keyword>
<keyword id="KW-0963">Cytoplasm</keyword>
<keyword id="KW-0436">Ligase</keyword>
<keyword id="KW-0547">Nucleotide-binding</keyword>
<keyword id="KW-0573">Peptidoglycan synthesis</keyword>
<evidence type="ECO:0000255" key="1">
    <source>
        <dbReference type="HAMAP-Rule" id="MF_00046"/>
    </source>
</evidence>
<protein>
    <recommendedName>
        <fullName evidence="1">UDP-N-acetylmuramate--L-alanine ligase</fullName>
        <ecNumber evidence="1">6.3.2.8</ecNumber>
    </recommendedName>
    <alternativeName>
        <fullName evidence="1">UDP-N-acetylmuramoyl-L-alanine synthetase</fullName>
    </alternativeName>
</protein>
<sequence length="456" mass="46580">MTTSIAGLESLGRVHFIGIGGVGMSAVARIMVSRGVPVSGSDVKDLPVMRDLSSAGARIAVGYDAGNLGDAQTIVAGSAIRADNPELVAAREAGLPVLHRSEALAATMAGHRVVTVAGTHGKSTTTSMVAVLLKEAGLDPSFAIGANVPALGVNAAHGSSDIFVAEADESDGSFLNYRPLIAVVTNVEADHLDHYGTPEAVFASFDDFAALLPAQGVLLACSDDAGARALADRTASKGTTRVLTYGTSDDADIRLHDGGPGDVSVALDGGVHKLELQVPGRHNALNAAAAFAVAVELGVEPGAAAAALGHFTGASRRFELKGRGRGVRVYDDYAHHPTEVRAALSAARSVAGDNKVHVLFQPHLFSRTREFSQEFAAALDLADTALVLDIYPAREDPIPGVTSTLITDHLVNGRLVSADEAVDAVAAVASEGDVVLTVGAGDVTAYGPVIVEALGG</sequence>
<proteinExistence type="inferred from homology"/>
<comment type="function">
    <text evidence="1">Cell wall formation.</text>
</comment>
<comment type="catalytic activity">
    <reaction evidence="1">
        <text>UDP-N-acetyl-alpha-D-muramate + L-alanine + ATP = UDP-N-acetyl-alpha-D-muramoyl-L-alanine + ADP + phosphate + H(+)</text>
        <dbReference type="Rhea" id="RHEA:23372"/>
        <dbReference type="ChEBI" id="CHEBI:15378"/>
        <dbReference type="ChEBI" id="CHEBI:30616"/>
        <dbReference type="ChEBI" id="CHEBI:43474"/>
        <dbReference type="ChEBI" id="CHEBI:57972"/>
        <dbReference type="ChEBI" id="CHEBI:70757"/>
        <dbReference type="ChEBI" id="CHEBI:83898"/>
        <dbReference type="ChEBI" id="CHEBI:456216"/>
        <dbReference type="EC" id="6.3.2.8"/>
    </reaction>
</comment>
<comment type="pathway">
    <text evidence="1">Cell wall biogenesis; peptidoglycan biosynthesis.</text>
</comment>
<comment type="subcellular location">
    <subcellularLocation>
        <location evidence="1">Cytoplasm</location>
    </subcellularLocation>
</comment>
<comment type="similarity">
    <text evidence="1">Belongs to the MurCDEF family.</text>
</comment>
<reference key="1">
    <citation type="journal article" date="2006" name="PLoS Genet.">
        <title>Secrets of soil survival revealed by the genome sequence of Arthrobacter aurescens TC1.</title>
        <authorList>
            <person name="Mongodin E.F."/>
            <person name="Shapir N."/>
            <person name="Daugherty S.C."/>
            <person name="DeBoy R.T."/>
            <person name="Emerson J.B."/>
            <person name="Shvartzbeyn A."/>
            <person name="Radune D."/>
            <person name="Vamathevan J."/>
            <person name="Riggs F."/>
            <person name="Grinberg V."/>
            <person name="Khouri H.M."/>
            <person name="Wackett L.P."/>
            <person name="Nelson K.E."/>
            <person name="Sadowsky M.J."/>
        </authorList>
    </citation>
    <scope>NUCLEOTIDE SEQUENCE [LARGE SCALE GENOMIC DNA]</scope>
    <source>
        <strain>TC1</strain>
    </source>
</reference>
<organism>
    <name type="scientific">Paenarthrobacter aurescens (strain TC1)</name>
    <dbReference type="NCBI Taxonomy" id="290340"/>
    <lineage>
        <taxon>Bacteria</taxon>
        <taxon>Bacillati</taxon>
        <taxon>Actinomycetota</taxon>
        <taxon>Actinomycetes</taxon>
        <taxon>Micrococcales</taxon>
        <taxon>Micrococcaceae</taxon>
        <taxon>Paenarthrobacter</taxon>
    </lineage>
</organism>
<dbReference type="EC" id="6.3.2.8" evidence="1"/>
<dbReference type="EMBL" id="CP000474">
    <property type="protein sequence ID" value="ABM09686.1"/>
    <property type="molecule type" value="Genomic_DNA"/>
</dbReference>
<dbReference type="RefSeq" id="WP_011774417.1">
    <property type="nucleotide sequence ID" value="NC_008711.1"/>
</dbReference>
<dbReference type="SMR" id="A1R5F9"/>
<dbReference type="STRING" id="290340.AAur_1711"/>
<dbReference type="KEGG" id="aau:AAur_1711"/>
<dbReference type="eggNOG" id="COG0773">
    <property type="taxonomic scope" value="Bacteria"/>
</dbReference>
<dbReference type="HOGENOM" id="CLU_028104_2_1_11"/>
<dbReference type="OrthoDB" id="9804126at2"/>
<dbReference type="UniPathway" id="UPA00219"/>
<dbReference type="Proteomes" id="UP000000637">
    <property type="component" value="Chromosome"/>
</dbReference>
<dbReference type="GO" id="GO:0005737">
    <property type="term" value="C:cytoplasm"/>
    <property type="evidence" value="ECO:0007669"/>
    <property type="project" value="UniProtKB-SubCell"/>
</dbReference>
<dbReference type="GO" id="GO:0005524">
    <property type="term" value="F:ATP binding"/>
    <property type="evidence" value="ECO:0007669"/>
    <property type="project" value="UniProtKB-UniRule"/>
</dbReference>
<dbReference type="GO" id="GO:0008763">
    <property type="term" value="F:UDP-N-acetylmuramate-L-alanine ligase activity"/>
    <property type="evidence" value="ECO:0007669"/>
    <property type="project" value="UniProtKB-UniRule"/>
</dbReference>
<dbReference type="GO" id="GO:0051301">
    <property type="term" value="P:cell division"/>
    <property type="evidence" value="ECO:0007669"/>
    <property type="project" value="UniProtKB-KW"/>
</dbReference>
<dbReference type="GO" id="GO:0071555">
    <property type="term" value="P:cell wall organization"/>
    <property type="evidence" value="ECO:0007669"/>
    <property type="project" value="UniProtKB-KW"/>
</dbReference>
<dbReference type="GO" id="GO:0009252">
    <property type="term" value="P:peptidoglycan biosynthetic process"/>
    <property type="evidence" value="ECO:0007669"/>
    <property type="project" value="UniProtKB-UniRule"/>
</dbReference>
<dbReference type="GO" id="GO:0008360">
    <property type="term" value="P:regulation of cell shape"/>
    <property type="evidence" value="ECO:0007669"/>
    <property type="project" value="UniProtKB-KW"/>
</dbReference>
<dbReference type="Gene3D" id="3.90.190.20">
    <property type="entry name" value="Mur ligase, C-terminal domain"/>
    <property type="match status" value="1"/>
</dbReference>
<dbReference type="Gene3D" id="3.40.1190.10">
    <property type="entry name" value="Mur-like, catalytic domain"/>
    <property type="match status" value="1"/>
</dbReference>
<dbReference type="Gene3D" id="3.40.50.720">
    <property type="entry name" value="NAD(P)-binding Rossmann-like Domain"/>
    <property type="match status" value="1"/>
</dbReference>
<dbReference type="HAMAP" id="MF_00046">
    <property type="entry name" value="MurC"/>
    <property type="match status" value="1"/>
</dbReference>
<dbReference type="InterPro" id="IPR036565">
    <property type="entry name" value="Mur-like_cat_sf"/>
</dbReference>
<dbReference type="InterPro" id="IPR004101">
    <property type="entry name" value="Mur_ligase_C"/>
</dbReference>
<dbReference type="InterPro" id="IPR036615">
    <property type="entry name" value="Mur_ligase_C_dom_sf"/>
</dbReference>
<dbReference type="InterPro" id="IPR013221">
    <property type="entry name" value="Mur_ligase_cen"/>
</dbReference>
<dbReference type="InterPro" id="IPR000713">
    <property type="entry name" value="Mur_ligase_N"/>
</dbReference>
<dbReference type="InterPro" id="IPR050061">
    <property type="entry name" value="MurCDEF_pg_biosynth"/>
</dbReference>
<dbReference type="InterPro" id="IPR005758">
    <property type="entry name" value="UDP-N-AcMur_Ala_ligase_MurC"/>
</dbReference>
<dbReference type="NCBIfam" id="TIGR01082">
    <property type="entry name" value="murC"/>
    <property type="match status" value="1"/>
</dbReference>
<dbReference type="PANTHER" id="PTHR43445:SF3">
    <property type="entry name" value="UDP-N-ACETYLMURAMATE--L-ALANINE LIGASE"/>
    <property type="match status" value="1"/>
</dbReference>
<dbReference type="PANTHER" id="PTHR43445">
    <property type="entry name" value="UDP-N-ACETYLMURAMATE--L-ALANINE LIGASE-RELATED"/>
    <property type="match status" value="1"/>
</dbReference>
<dbReference type="Pfam" id="PF01225">
    <property type="entry name" value="Mur_ligase"/>
    <property type="match status" value="1"/>
</dbReference>
<dbReference type="Pfam" id="PF02875">
    <property type="entry name" value="Mur_ligase_C"/>
    <property type="match status" value="1"/>
</dbReference>
<dbReference type="Pfam" id="PF08245">
    <property type="entry name" value="Mur_ligase_M"/>
    <property type="match status" value="1"/>
</dbReference>
<dbReference type="SUPFAM" id="SSF51984">
    <property type="entry name" value="MurCD N-terminal domain"/>
    <property type="match status" value="1"/>
</dbReference>
<dbReference type="SUPFAM" id="SSF53623">
    <property type="entry name" value="MurD-like peptide ligases, catalytic domain"/>
    <property type="match status" value="1"/>
</dbReference>
<dbReference type="SUPFAM" id="SSF53244">
    <property type="entry name" value="MurD-like peptide ligases, peptide-binding domain"/>
    <property type="match status" value="1"/>
</dbReference>
<feature type="chain" id="PRO_0000336812" description="UDP-N-acetylmuramate--L-alanine ligase">
    <location>
        <begin position="1"/>
        <end position="456"/>
    </location>
</feature>
<feature type="binding site" evidence="1">
    <location>
        <begin position="118"/>
        <end position="124"/>
    </location>
    <ligand>
        <name>ATP</name>
        <dbReference type="ChEBI" id="CHEBI:30616"/>
    </ligand>
</feature>
<accession>A1R5F9</accession>